<dbReference type="EMBL" id="CP001402">
    <property type="protein sequence ID" value="ACR42406.1"/>
    <property type="molecule type" value="Genomic_DNA"/>
</dbReference>
<dbReference type="RefSeq" id="WP_012711732.1">
    <property type="nucleotide sequence ID" value="NC_012726.1"/>
</dbReference>
<dbReference type="SMR" id="C4KIJ2"/>
<dbReference type="GeneID" id="84062107"/>
<dbReference type="KEGG" id="sid:M164_1803"/>
<dbReference type="HOGENOM" id="CLU_177460_0_0_2"/>
<dbReference type="Proteomes" id="UP000001479">
    <property type="component" value="Chromosome"/>
</dbReference>
<dbReference type="GO" id="GO:1990904">
    <property type="term" value="C:ribonucleoprotein complex"/>
    <property type="evidence" value="ECO:0007669"/>
    <property type="project" value="UniProtKB-KW"/>
</dbReference>
<dbReference type="GO" id="GO:0005840">
    <property type="term" value="C:ribosome"/>
    <property type="evidence" value="ECO:0007669"/>
    <property type="project" value="UniProtKB-KW"/>
</dbReference>
<dbReference type="GO" id="GO:0070180">
    <property type="term" value="F:large ribosomal subunit rRNA binding"/>
    <property type="evidence" value="ECO:0007669"/>
    <property type="project" value="UniProtKB-UniRule"/>
</dbReference>
<dbReference type="GO" id="GO:0003735">
    <property type="term" value="F:structural constituent of ribosome"/>
    <property type="evidence" value="ECO:0007669"/>
    <property type="project" value="InterPro"/>
</dbReference>
<dbReference type="GO" id="GO:0006412">
    <property type="term" value="P:translation"/>
    <property type="evidence" value="ECO:0007669"/>
    <property type="project" value="UniProtKB-UniRule"/>
</dbReference>
<dbReference type="Gene3D" id="3.10.20.10">
    <property type="match status" value="1"/>
</dbReference>
<dbReference type="HAMAP" id="MF_00273">
    <property type="entry name" value="Ribosomal_eL20"/>
    <property type="match status" value="1"/>
</dbReference>
<dbReference type="InterPro" id="IPR028877">
    <property type="entry name" value="Ribosomal_eL20"/>
</dbReference>
<dbReference type="InterPro" id="IPR023573">
    <property type="entry name" value="Ribosomal_eL20_dom"/>
</dbReference>
<dbReference type="NCBIfam" id="NF001981">
    <property type="entry name" value="PRK00773.1-1"/>
    <property type="match status" value="1"/>
</dbReference>
<dbReference type="Pfam" id="PF01775">
    <property type="entry name" value="Ribosomal_L18A"/>
    <property type="match status" value="1"/>
</dbReference>
<dbReference type="SUPFAM" id="SSF160374">
    <property type="entry name" value="RplX-like"/>
    <property type="match status" value="1"/>
</dbReference>
<organism>
    <name type="scientific">Saccharolobus islandicus (strain M.16.4 / Kamchatka #3)</name>
    <name type="common">Sulfolobus islandicus</name>
    <dbReference type="NCBI Taxonomy" id="426118"/>
    <lineage>
        <taxon>Archaea</taxon>
        <taxon>Thermoproteota</taxon>
        <taxon>Thermoprotei</taxon>
        <taxon>Sulfolobales</taxon>
        <taxon>Sulfolobaceae</taxon>
        <taxon>Saccharolobus</taxon>
    </lineage>
</organism>
<accession>C4KIJ2</accession>
<evidence type="ECO:0000255" key="1">
    <source>
        <dbReference type="HAMAP-Rule" id="MF_00273"/>
    </source>
</evidence>
<evidence type="ECO:0000305" key="2"/>
<sequence length="86" mass="10344">MSEIKFYLVKGSALFGESHYPEKRKFVKIVRALNEKQAIEYIYSYFGSKNKIKRYNIKIEQISEIKEEEIPDRRIRELAKIDKIIM</sequence>
<feature type="chain" id="PRO_1000204756" description="Large ribosomal subunit protein eL20">
    <location>
        <begin position="1"/>
        <end position="86"/>
    </location>
</feature>
<name>RL18A_SACI6</name>
<protein>
    <recommendedName>
        <fullName evidence="1">Large ribosomal subunit protein eL20</fullName>
    </recommendedName>
    <alternativeName>
        <fullName evidence="2">50S ribosomal protein L18Ae</fullName>
    </alternativeName>
    <alternativeName>
        <fullName evidence="1">50S ribosomal protein L20e</fullName>
    </alternativeName>
    <alternativeName>
        <fullName evidence="1">50S ribosomal protein LX</fullName>
    </alternativeName>
</protein>
<comment type="subunit">
    <text evidence="1">Part of the 50S ribosomal subunit. Binds 23S rRNA.</text>
</comment>
<comment type="similarity">
    <text evidence="1">Belongs to the eukaryotic ribosomal protein eL20 family.</text>
</comment>
<proteinExistence type="inferred from homology"/>
<reference key="1">
    <citation type="journal article" date="2009" name="Proc. Natl. Acad. Sci. U.S.A.">
        <title>Biogeography of the Sulfolobus islandicus pan-genome.</title>
        <authorList>
            <person name="Reno M.L."/>
            <person name="Held N.L."/>
            <person name="Fields C.J."/>
            <person name="Burke P.V."/>
            <person name="Whitaker R.J."/>
        </authorList>
    </citation>
    <scope>NUCLEOTIDE SEQUENCE [LARGE SCALE GENOMIC DNA]</scope>
    <source>
        <strain>M.16.4 / Kamchatka #3</strain>
    </source>
</reference>
<keyword id="KW-0687">Ribonucleoprotein</keyword>
<keyword id="KW-0689">Ribosomal protein</keyword>
<keyword id="KW-0694">RNA-binding</keyword>
<keyword id="KW-0699">rRNA-binding</keyword>
<gene>
    <name evidence="1" type="primary">rpl18a</name>
    <name evidence="1" type="synonym">rpl20e</name>
    <name evidence="1" type="synonym">rplX</name>
    <name type="ordered locus">M164_1803</name>
</gene>